<feature type="chain" id="PRO_0000455091" description="Protein ENHANCER OF LHP1 1">
    <location>
        <begin position="1"/>
        <end position="953"/>
    </location>
</feature>
<feature type="repeat" description="WD 1" evidence="1">
    <location>
        <begin position="15"/>
        <end position="55"/>
    </location>
</feature>
<feature type="repeat" description="WD 2" evidence="1">
    <location>
        <begin position="60"/>
        <end position="99"/>
    </location>
</feature>
<feature type="repeat" description="WD 3" evidence="1">
    <location>
        <begin position="102"/>
        <end position="143"/>
    </location>
</feature>
<feature type="repeat" description="WD 4" evidence="1">
    <location>
        <begin position="144"/>
        <end position="183"/>
    </location>
</feature>
<feature type="repeat" description="WD 5" evidence="1">
    <location>
        <begin position="192"/>
        <end position="232"/>
    </location>
</feature>
<feature type="repeat" description="WD 6" evidence="1">
    <location>
        <begin position="236"/>
        <end position="275"/>
    </location>
</feature>
<feature type="repeat" description="WD 7" evidence="1">
    <location>
        <begin position="277"/>
        <end position="316"/>
    </location>
</feature>
<feature type="region of interest" description="Disordered" evidence="3">
    <location>
        <begin position="347"/>
        <end position="370"/>
    </location>
</feature>
<feature type="region of interest" description="Disordered" evidence="3">
    <location>
        <begin position="385"/>
        <end position="419"/>
    </location>
</feature>
<feature type="region of interest" description="Disordered" evidence="3">
    <location>
        <begin position="851"/>
        <end position="877"/>
    </location>
</feature>
<feature type="region of interest" description="Disordered" evidence="3">
    <location>
        <begin position="919"/>
        <end position="953"/>
    </location>
</feature>
<feature type="short sequence motif" description="Nuclear localization signal" evidence="2">
    <location>
        <begin position="900"/>
        <end position="907"/>
    </location>
</feature>
<feature type="compositionally biased region" description="Acidic residues" evidence="3">
    <location>
        <begin position="349"/>
        <end position="359"/>
    </location>
</feature>
<feature type="compositionally biased region" description="Polar residues" evidence="3">
    <location>
        <begin position="853"/>
        <end position="877"/>
    </location>
</feature>
<feature type="compositionally biased region" description="Basic and acidic residues" evidence="3">
    <location>
        <begin position="926"/>
        <end position="943"/>
    </location>
</feature>
<feature type="compositionally biased region" description="Polar residues" evidence="3">
    <location>
        <begin position="944"/>
        <end position="953"/>
    </location>
</feature>
<evidence type="ECO:0000255" key="1"/>
<evidence type="ECO:0000255" key="2">
    <source>
        <dbReference type="PROSITE-ProRule" id="PRU00768"/>
    </source>
</evidence>
<evidence type="ECO:0000256" key="3">
    <source>
        <dbReference type="SAM" id="MobiDB-lite"/>
    </source>
</evidence>
<evidence type="ECO:0000269" key="4">
    <source>
    </source>
</evidence>
<evidence type="ECO:0000303" key="5">
    <source>
    </source>
</evidence>
<evidence type="ECO:0000305" key="6"/>
<evidence type="ECO:0000312" key="7">
    <source>
        <dbReference type="Araport" id="AT3G42660"/>
    </source>
</evidence>
<evidence type="ECO:0000312" key="8">
    <source>
        <dbReference type="EMBL" id="CAB86449.1"/>
    </source>
</evidence>
<comment type="function">
    <text evidence="4">Participates in maintaining the H3K27me3 mark at target genes by interacting with LHP1-PRC2 complexes during replication, thus contributing to H3K27me3 inheritance.</text>
</comment>
<comment type="subunit">
    <text evidence="4">Interacts with EZA1/SWN, LHP1, SLD5 and CLF in the nucleus.</text>
</comment>
<comment type="subcellular location">
    <subcellularLocation>
        <location evidence="2 4">Nucleus</location>
    </subcellularLocation>
</comment>
<comment type="tissue specificity">
    <text evidence="4">Expressed in root meristematic zones, initiating lateral roots, young leaves and the shoot apex.</text>
</comment>
<comment type="developmental stage">
    <text evidence="4">Mainly expressed in dividing cells such as primary roots of seedlings (within the meristematic zone but not in the differentiation zone), lateral roots primordia, developing leaves and shoot apices.</text>
</comment>
<comment type="induction">
    <text evidence="4">Induced by the auxin analog 2,4-D.</text>
</comment>
<comment type="disruption phenotype">
    <text evidence="4">Enhances phenotypes of the lhp1-3 mutant, thus leading to reduced plant size, early flowering in all photoperiod conditions and altered leaf morphology, associated with an increased expression of H3K27me3-positive genes.</text>
</comment>
<comment type="sequence caution" evidence="6">
    <conflict type="erroneous gene model prediction">
        <sequence resource="EMBL-CDS" id="CAB86449"/>
    </conflict>
</comment>
<proteinExistence type="evidence at protein level"/>
<gene>
    <name evidence="5" type="primary">EOL1</name>
    <name evidence="7" type="ordered locus">At3g42660</name>
    <name evidence="8" type="ORF">T12K4_110</name>
</gene>
<protein>
    <recommendedName>
        <fullName evidence="5">Protein ENHANCER OF LHP1 1</fullName>
    </recommendedName>
</protein>
<keyword id="KW-0539">Nucleus</keyword>
<keyword id="KW-1185">Reference proteome</keyword>
<keyword id="KW-0677">Repeat</keyword>
<keyword id="KW-0853">WD repeat</keyword>
<dbReference type="EMBL" id="AL138640">
    <property type="protein sequence ID" value="CAB86449.1"/>
    <property type="status" value="ALT_SEQ"/>
    <property type="molecule type" value="Genomic_DNA"/>
</dbReference>
<dbReference type="EMBL" id="CP002686">
    <property type="protein sequence ID" value="AEE77744.1"/>
    <property type="molecule type" value="Genomic_DNA"/>
</dbReference>
<dbReference type="PIR" id="T47324">
    <property type="entry name" value="T47324"/>
</dbReference>
<dbReference type="RefSeq" id="NP_189852.2">
    <property type="nucleotide sequence ID" value="NM_114133.2"/>
</dbReference>
<dbReference type="SMR" id="F4JF14"/>
<dbReference type="FunCoup" id="F4JF14">
    <property type="interactions" value="3231"/>
</dbReference>
<dbReference type="STRING" id="3702.F4JF14"/>
<dbReference type="GlyGen" id="F4JF14">
    <property type="glycosylation" value="2 sites"/>
</dbReference>
<dbReference type="iPTMnet" id="F4JF14"/>
<dbReference type="PaxDb" id="3702-AT3G42660.1"/>
<dbReference type="ProteomicsDB" id="195632"/>
<dbReference type="EnsemblPlants" id="AT3G42660.1">
    <property type="protein sequence ID" value="AT3G42660.1"/>
    <property type="gene ID" value="AT3G42660"/>
</dbReference>
<dbReference type="GeneID" id="823286"/>
<dbReference type="Gramene" id="AT3G42660.1">
    <property type="protein sequence ID" value="AT3G42660.1"/>
    <property type="gene ID" value="AT3G42660"/>
</dbReference>
<dbReference type="KEGG" id="ath:AT3G42660"/>
<dbReference type="Araport" id="AT3G42660"/>
<dbReference type="TAIR" id="AT3G42660">
    <property type="gene designation" value="EOL1"/>
</dbReference>
<dbReference type="eggNOG" id="KOG1274">
    <property type="taxonomic scope" value="Eukaryota"/>
</dbReference>
<dbReference type="HOGENOM" id="CLU_004219_4_0_1"/>
<dbReference type="InParanoid" id="F4JF14"/>
<dbReference type="OMA" id="RYAHTNG"/>
<dbReference type="CD-CODE" id="4299E36E">
    <property type="entry name" value="Nucleolus"/>
</dbReference>
<dbReference type="PRO" id="PR:F4JF14"/>
<dbReference type="Proteomes" id="UP000006548">
    <property type="component" value="Chromosome 3"/>
</dbReference>
<dbReference type="ExpressionAtlas" id="F4JF14">
    <property type="expression patterns" value="baseline and differential"/>
</dbReference>
<dbReference type="GO" id="GO:0005634">
    <property type="term" value="C:nucleus"/>
    <property type="evidence" value="ECO:0000314"/>
    <property type="project" value="TAIR"/>
</dbReference>
<dbReference type="GO" id="GO:0009733">
    <property type="term" value="P:response to auxin"/>
    <property type="evidence" value="ECO:0000270"/>
    <property type="project" value="UniProtKB"/>
</dbReference>
<dbReference type="FunFam" id="2.130.10.10:FF:001570">
    <property type="entry name" value="Transducin family protein / WD-40 repeat family protein"/>
    <property type="match status" value="1"/>
</dbReference>
<dbReference type="FunFam" id="2.130.10.10:FF:002324">
    <property type="entry name" value="Transducin family protein / WD-40 repeat family protein"/>
    <property type="match status" value="1"/>
</dbReference>
<dbReference type="Gene3D" id="2.130.10.10">
    <property type="entry name" value="YVTN repeat-like/Quinoprotein amine dehydrogenase"/>
    <property type="match status" value="2"/>
</dbReference>
<dbReference type="InterPro" id="IPR015943">
    <property type="entry name" value="WD40/YVTN_repeat-like_dom_sf"/>
</dbReference>
<dbReference type="InterPro" id="IPR019775">
    <property type="entry name" value="WD40_repeat_CS"/>
</dbReference>
<dbReference type="InterPro" id="IPR036322">
    <property type="entry name" value="WD40_repeat_dom_sf"/>
</dbReference>
<dbReference type="InterPro" id="IPR001680">
    <property type="entry name" value="WD40_rpt"/>
</dbReference>
<dbReference type="InterPro" id="IPR022100">
    <property type="entry name" value="WDHD1/CFT4_beta-prop_2nd"/>
</dbReference>
<dbReference type="InterPro" id="IPR048591">
    <property type="entry name" value="WDHD1/CFT4_hel"/>
</dbReference>
<dbReference type="PANTHER" id="PTHR19932">
    <property type="entry name" value="WD REPEAT AND HMG-BOX DNA BINDING PROTEIN"/>
    <property type="match status" value="1"/>
</dbReference>
<dbReference type="PANTHER" id="PTHR19932:SF10">
    <property type="entry name" value="WD REPEAT AND HMG-BOX DNA-BINDING PROTEIN 1"/>
    <property type="match status" value="1"/>
</dbReference>
<dbReference type="Pfam" id="PF20946">
    <property type="entry name" value="Ctf4_C"/>
    <property type="match status" value="1"/>
</dbReference>
<dbReference type="Pfam" id="PF12341">
    <property type="entry name" value="Mcl1_mid"/>
    <property type="match status" value="1"/>
</dbReference>
<dbReference type="Pfam" id="PF24817">
    <property type="entry name" value="WD40_WDHD1_1st"/>
    <property type="match status" value="1"/>
</dbReference>
<dbReference type="SMART" id="SM00320">
    <property type="entry name" value="WD40"/>
    <property type="match status" value="6"/>
</dbReference>
<dbReference type="SUPFAM" id="SSF50978">
    <property type="entry name" value="WD40 repeat-like"/>
    <property type="match status" value="1"/>
</dbReference>
<dbReference type="PROSITE" id="PS00678">
    <property type="entry name" value="WD_REPEATS_1"/>
    <property type="match status" value="1"/>
</dbReference>
<dbReference type="PROSITE" id="PS50082">
    <property type="entry name" value="WD_REPEATS_2"/>
    <property type="match status" value="3"/>
</dbReference>
<dbReference type="PROSITE" id="PS50294">
    <property type="entry name" value="WD_REPEATS_REGION"/>
    <property type="match status" value="1"/>
</dbReference>
<reference key="1">
    <citation type="journal article" date="2000" name="Nature">
        <title>Sequence and analysis of chromosome 3 of the plant Arabidopsis thaliana.</title>
        <authorList>
            <person name="Salanoubat M."/>
            <person name="Lemcke K."/>
            <person name="Rieger M."/>
            <person name="Ansorge W."/>
            <person name="Unseld M."/>
            <person name="Fartmann B."/>
            <person name="Valle G."/>
            <person name="Bloecker H."/>
            <person name="Perez-Alonso M."/>
            <person name="Obermaier B."/>
            <person name="Delseny M."/>
            <person name="Boutry M."/>
            <person name="Grivell L.A."/>
            <person name="Mache R."/>
            <person name="Puigdomenech P."/>
            <person name="De Simone V."/>
            <person name="Choisne N."/>
            <person name="Artiguenave F."/>
            <person name="Robert C."/>
            <person name="Brottier P."/>
            <person name="Wincker P."/>
            <person name="Cattolico L."/>
            <person name="Weissenbach J."/>
            <person name="Saurin W."/>
            <person name="Quetier F."/>
            <person name="Schaefer M."/>
            <person name="Mueller-Auer S."/>
            <person name="Gabel C."/>
            <person name="Fuchs M."/>
            <person name="Benes V."/>
            <person name="Wurmbach E."/>
            <person name="Drzonek H."/>
            <person name="Erfle H."/>
            <person name="Jordan N."/>
            <person name="Bangert S."/>
            <person name="Wiedelmann R."/>
            <person name="Kranz H."/>
            <person name="Voss H."/>
            <person name="Holland R."/>
            <person name="Brandt P."/>
            <person name="Nyakatura G."/>
            <person name="Vezzi A."/>
            <person name="D'Angelo M."/>
            <person name="Pallavicini A."/>
            <person name="Toppo S."/>
            <person name="Simionati B."/>
            <person name="Conrad A."/>
            <person name="Hornischer K."/>
            <person name="Kauer G."/>
            <person name="Loehnert T.-H."/>
            <person name="Nordsiek G."/>
            <person name="Reichelt J."/>
            <person name="Scharfe M."/>
            <person name="Schoen O."/>
            <person name="Bargues M."/>
            <person name="Terol J."/>
            <person name="Climent J."/>
            <person name="Navarro P."/>
            <person name="Collado C."/>
            <person name="Perez-Perez A."/>
            <person name="Ottenwaelder B."/>
            <person name="Duchemin D."/>
            <person name="Cooke R."/>
            <person name="Laudie M."/>
            <person name="Berger-Llauro C."/>
            <person name="Purnelle B."/>
            <person name="Masuy D."/>
            <person name="de Haan M."/>
            <person name="Maarse A.C."/>
            <person name="Alcaraz J.-P."/>
            <person name="Cottet A."/>
            <person name="Casacuberta E."/>
            <person name="Monfort A."/>
            <person name="Argiriou A."/>
            <person name="Flores M."/>
            <person name="Liguori R."/>
            <person name="Vitale D."/>
            <person name="Mannhaupt G."/>
            <person name="Haase D."/>
            <person name="Schoof H."/>
            <person name="Rudd S."/>
            <person name="Zaccaria P."/>
            <person name="Mewes H.-W."/>
            <person name="Mayer K.F.X."/>
            <person name="Kaul S."/>
            <person name="Town C.D."/>
            <person name="Koo H.L."/>
            <person name="Tallon L.J."/>
            <person name="Jenkins J."/>
            <person name="Rooney T."/>
            <person name="Rizzo M."/>
            <person name="Walts A."/>
            <person name="Utterback T."/>
            <person name="Fujii C.Y."/>
            <person name="Shea T.P."/>
            <person name="Creasy T.H."/>
            <person name="Haas B."/>
            <person name="Maiti R."/>
            <person name="Wu D."/>
            <person name="Peterson J."/>
            <person name="Van Aken S."/>
            <person name="Pai G."/>
            <person name="Militscher J."/>
            <person name="Sellers P."/>
            <person name="Gill J.E."/>
            <person name="Feldblyum T.V."/>
            <person name="Preuss D."/>
            <person name="Lin X."/>
            <person name="Nierman W.C."/>
            <person name="Salzberg S.L."/>
            <person name="White O."/>
            <person name="Venter J.C."/>
            <person name="Fraser C.M."/>
            <person name="Kaneko T."/>
            <person name="Nakamura Y."/>
            <person name="Sato S."/>
            <person name="Kato T."/>
            <person name="Asamizu E."/>
            <person name="Sasamoto S."/>
            <person name="Kimura T."/>
            <person name="Idesawa K."/>
            <person name="Kawashima K."/>
            <person name="Kishida Y."/>
            <person name="Kiyokawa C."/>
            <person name="Kohara M."/>
            <person name="Matsumoto M."/>
            <person name="Matsuno A."/>
            <person name="Muraki A."/>
            <person name="Nakayama S."/>
            <person name="Nakazaki N."/>
            <person name="Shinpo S."/>
            <person name="Takeuchi C."/>
            <person name="Wada T."/>
            <person name="Watanabe A."/>
            <person name="Yamada M."/>
            <person name="Yasuda M."/>
            <person name="Tabata S."/>
        </authorList>
    </citation>
    <scope>NUCLEOTIDE SEQUENCE [LARGE SCALE GENOMIC DNA]</scope>
    <source>
        <strain>cv. Columbia</strain>
    </source>
</reference>
<reference key="2">
    <citation type="journal article" date="2017" name="Plant J.">
        <title>Araport11: a complete reannotation of the Arabidopsis thaliana reference genome.</title>
        <authorList>
            <person name="Cheng C.Y."/>
            <person name="Krishnakumar V."/>
            <person name="Chan A.P."/>
            <person name="Thibaud-Nissen F."/>
            <person name="Schobel S."/>
            <person name="Town C.D."/>
        </authorList>
    </citation>
    <scope>GENOME REANNOTATION</scope>
    <source>
        <strain>cv. Columbia</strain>
    </source>
</reference>
<reference key="3">
    <citation type="journal article" date="2017" name="Proc. Natl. Acad. Sci. U.S.A.">
        <title>Ctf4-related protein recruits LHP1-PRC2 to maintain H3K27me3 levels in dividing cells in Arabidopsis thaliana.</title>
        <authorList>
            <person name="Zhou Y."/>
            <person name="Tergemina E."/>
            <person name="Cui H."/>
            <person name="Foerderer A."/>
            <person name="Hartwig B."/>
            <person name="Velikkakam James G."/>
            <person name="Schneeberger K."/>
            <person name="Turck F."/>
        </authorList>
    </citation>
    <scope>FUNCTION</scope>
    <scope>DISRUPTION PHENOTYPE</scope>
    <scope>SUBCELLULAR LOCATION</scope>
    <scope>INTERACTION WITH EZA1/SWN; LHP1; SLD5 AND CLF</scope>
    <scope>DEVELOPMENTAL STAGE</scope>
    <scope>TISSUE SPECIFICITY</scope>
    <scope>INDUCTION BY AUXIN</scope>
    <source>
        <strain>cv. Columbia</strain>
    </source>
</reference>
<organism>
    <name type="scientific">Arabidopsis thaliana</name>
    <name type="common">Mouse-ear cress</name>
    <dbReference type="NCBI Taxonomy" id="3702"/>
    <lineage>
        <taxon>Eukaryota</taxon>
        <taxon>Viridiplantae</taxon>
        <taxon>Streptophyta</taxon>
        <taxon>Embryophyta</taxon>
        <taxon>Tracheophyta</taxon>
        <taxon>Spermatophyta</taxon>
        <taxon>Magnoliopsida</taxon>
        <taxon>eudicotyledons</taxon>
        <taxon>Gunneridae</taxon>
        <taxon>Pentapetalae</taxon>
        <taxon>rosids</taxon>
        <taxon>malvids</taxon>
        <taxon>Brassicales</taxon>
        <taxon>Brassicaceae</taxon>
        <taxon>Camelineae</taxon>
        <taxon>Arabidopsis</taxon>
    </lineage>
</organism>
<name>ENOL1_ARATH</name>
<accession>F4JF14</accession>
<accession>Q9M298</accession>
<sequence>MKSRSLKLREAHKVGGSAAFCSILWDHKAEHFVTSSSSDPSISVHDGLSTSTLPPTILRHHQDGVTSLALSNDSTLLASGSIDHCVKLYKFPSGEFQTNITRFTLPIRVLAFNGSGSLLAAAGDDEGIKLINTFDGSIVRVLKGHKGPVTGLDFHPNGELLASIDTTGTVLCWELQNGVVSFTLKGVAPDTGFNTSIVNIPRWSPDGRTLAVPGLRNDVVMYDRFTGEKLFALRGDHLEAICYLTWAPNGKYIATSGLDKQVLLWDVDKKQDIDRHKFEERICCMSWKPNGNALSVIDAKGRYGVWESLVPSSMLSPTVGVPDIVPKKRNEILDFDDEVEEEIYRASESLDDAMGDSDDGESHHTSRKRLRKKTLIDEDVDDAYEELNDGSSLPSASEYRKKSHRGHREKQGARSGAFKGISASTKYKMQSSFQPGATPPEPGKRTFLCYNMLGCITTIEHEGNSRIETDFHDTGRGPRVSSMIDIYGFTMASINETGCVFANPCKGEKNMSVLMYRPFRSWASNSEWTMRFEGEEVKVVANGSGWVAAVTSLNLLRVFSEGGLQKHILSLDGPVVTAVGCKDHLAVVTHVSDCLPSNEQVMEFRVFNISKMTQELKGRVALTPGSRLTWIGFSEEGSLSSYDSEGVLRVFTSQYGGSWIPVFSTSKEKKQEENYWVVGLNTSSLYCIACKYAEMFPQVTPKPILTILDLSLPLASSDLGAASLENELILKQLRLYETQRKVDDMALVGVDTTALEDEAFDLEVSQDKCILRLISSCCSSDSFARASELMELLTLEKSMRAAITLVTKLKLPFLAEKFSSILEERLLEEASEAAVTNPALNPNGEVVTRVESKVQNPPASIQTSENTEAVMKSSATKLSAPTLLKKSKVSEGLKLGKEQTKKDKSDDAKIKEIKKLNLKNPVNNVNKEDKGQEKEVNQGEARRSSNPFLKSTV</sequence>